<keyword id="KW-0963">Cytoplasm</keyword>
<keyword id="KW-0269">Exonuclease</keyword>
<keyword id="KW-0378">Hydrolase</keyword>
<keyword id="KW-0540">Nuclease</keyword>
<reference key="1">
    <citation type="journal article" date="2004" name="Nat. Biotechnol.">
        <title>The genome sequence of the capnophilic rumen bacterium Mannheimia succiniciproducens.</title>
        <authorList>
            <person name="Hong S.H."/>
            <person name="Kim J.S."/>
            <person name="Lee S.Y."/>
            <person name="In Y.H."/>
            <person name="Choi S.S."/>
            <person name="Rih J.-K."/>
            <person name="Kim C.H."/>
            <person name="Jeong H."/>
            <person name="Hur C.G."/>
            <person name="Kim J.J."/>
        </authorList>
    </citation>
    <scope>NUCLEOTIDE SEQUENCE [LARGE SCALE GENOMIC DNA]</scope>
    <source>
        <strain>KCTC 0769BP / MBEL55E</strain>
    </source>
</reference>
<accession>Q65SE1</accession>
<dbReference type="EC" id="3.1.15.-" evidence="1"/>
<dbReference type="EMBL" id="AE016827">
    <property type="protein sequence ID" value="AAU38119.1"/>
    <property type="molecule type" value="Genomic_DNA"/>
</dbReference>
<dbReference type="RefSeq" id="WP_011200685.1">
    <property type="nucleotide sequence ID" value="NC_006300.1"/>
</dbReference>
<dbReference type="SMR" id="Q65SE1"/>
<dbReference type="STRING" id="221988.MS1512"/>
<dbReference type="KEGG" id="msu:MS1512"/>
<dbReference type="eggNOG" id="COG1949">
    <property type="taxonomic scope" value="Bacteria"/>
</dbReference>
<dbReference type="HOGENOM" id="CLU_064761_2_0_6"/>
<dbReference type="OrthoDB" id="9801329at2"/>
<dbReference type="Proteomes" id="UP000000607">
    <property type="component" value="Chromosome"/>
</dbReference>
<dbReference type="GO" id="GO:0005737">
    <property type="term" value="C:cytoplasm"/>
    <property type="evidence" value="ECO:0007669"/>
    <property type="project" value="UniProtKB-SubCell"/>
</dbReference>
<dbReference type="GO" id="GO:0000175">
    <property type="term" value="F:3'-5'-RNA exonuclease activity"/>
    <property type="evidence" value="ECO:0007669"/>
    <property type="project" value="InterPro"/>
</dbReference>
<dbReference type="GO" id="GO:0003676">
    <property type="term" value="F:nucleic acid binding"/>
    <property type="evidence" value="ECO:0007669"/>
    <property type="project" value="InterPro"/>
</dbReference>
<dbReference type="GO" id="GO:0006259">
    <property type="term" value="P:DNA metabolic process"/>
    <property type="evidence" value="ECO:0007669"/>
    <property type="project" value="UniProtKB-ARBA"/>
</dbReference>
<dbReference type="CDD" id="cd06135">
    <property type="entry name" value="Orn"/>
    <property type="match status" value="1"/>
</dbReference>
<dbReference type="FunFam" id="3.30.420.10:FF:000003">
    <property type="entry name" value="Oligoribonuclease"/>
    <property type="match status" value="1"/>
</dbReference>
<dbReference type="Gene3D" id="3.30.420.10">
    <property type="entry name" value="Ribonuclease H-like superfamily/Ribonuclease H"/>
    <property type="match status" value="1"/>
</dbReference>
<dbReference type="HAMAP" id="MF_00045">
    <property type="entry name" value="Oligoribonuclease"/>
    <property type="match status" value="1"/>
</dbReference>
<dbReference type="InterPro" id="IPR013520">
    <property type="entry name" value="Exonuclease_RNaseT/DNA_pol3"/>
</dbReference>
<dbReference type="InterPro" id="IPR022894">
    <property type="entry name" value="Oligoribonuclease"/>
</dbReference>
<dbReference type="InterPro" id="IPR012337">
    <property type="entry name" value="RNaseH-like_sf"/>
</dbReference>
<dbReference type="InterPro" id="IPR036397">
    <property type="entry name" value="RNaseH_sf"/>
</dbReference>
<dbReference type="NCBIfam" id="NF003765">
    <property type="entry name" value="PRK05359.1"/>
    <property type="match status" value="1"/>
</dbReference>
<dbReference type="PANTHER" id="PTHR11046">
    <property type="entry name" value="OLIGORIBONUCLEASE, MITOCHONDRIAL"/>
    <property type="match status" value="1"/>
</dbReference>
<dbReference type="PANTHER" id="PTHR11046:SF0">
    <property type="entry name" value="OLIGORIBONUCLEASE, MITOCHONDRIAL"/>
    <property type="match status" value="1"/>
</dbReference>
<dbReference type="Pfam" id="PF00929">
    <property type="entry name" value="RNase_T"/>
    <property type="match status" value="1"/>
</dbReference>
<dbReference type="SMART" id="SM00479">
    <property type="entry name" value="EXOIII"/>
    <property type="match status" value="1"/>
</dbReference>
<dbReference type="SUPFAM" id="SSF53098">
    <property type="entry name" value="Ribonuclease H-like"/>
    <property type="match status" value="1"/>
</dbReference>
<gene>
    <name evidence="1" type="primary">orn</name>
    <name type="ordered locus">MS1512</name>
</gene>
<protein>
    <recommendedName>
        <fullName evidence="1">Oligoribonuclease</fullName>
        <ecNumber evidence="1">3.1.15.-</ecNumber>
    </recommendedName>
</protein>
<name>ORN_MANSM</name>
<feature type="chain" id="PRO_0000111046" description="Oligoribonuclease">
    <location>
        <begin position="1"/>
        <end position="186"/>
    </location>
</feature>
<feature type="domain" description="Exonuclease" evidence="1">
    <location>
        <begin position="8"/>
        <end position="171"/>
    </location>
</feature>
<feature type="active site" evidence="1">
    <location>
        <position position="129"/>
    </location>
</feature>
<sequence>MQLDNQNLIWIDLEMTGLDPENERIIEIATIVTDKDLNILAEGPVLAVHQSDELLAKMSDWCIKTHSANGLVDRVKASKLTERAAELQTIDFLKKWVPKGASPICGNSVAQDKRFLFKYMPELADYFHYRHLDVSTLKELARRWKPELLNGFEKKNTHLALDDIRESIAELAYYRDHFIKLDGDQK</sequence>
<organism>
    <name type="scientific">Mannheimia succiniciproducens (strain KCTC 0769BP / MBEL55E)</name>
    <dbReference type="NCBI Taxonomy" id="221988"/>
    <lineage>
        <taxon>Bacteria</taxon>
        <taxon>Pseudomonadati</taxon>
        <taxon>Pseudomonadota</taxon>
        <taxon>Gammaproteobacteria</taxon>
        <taxon>Pasteurellales</taxon>
        <taxon>Pasteurellaceae</taxon>
        <taxon>Basfia</taxon>
    </lineage>
</organism>
<proteinExistence type="inferred from homology"/>
<evidence type="ECO:0000255" key="1">
    <source>
        <dbReference type="HAMAP-Rule" id="MF_00045"/>
    </source>
</evidence>
<comment type="function">
    <text evidence="1">3'-to-5' exoribonuclease specific for small oligoribonucleotides.</text>
</comment>
<comment type="subcellular location">
    <subcellularLocation>
        <location evidence="1">Cytoplasm</location>
    </subcellularLocation>
</comment>
<comment type="similarity">
    <text evidence="1">Belongs to the oligoribonuclease family.</text>
</comment>